<keyword id="KW-0004">4Fe-4S</keyword>
<keyword id="KW-0227">DNA damage</keyword>
<keyword id="KW-0234">DNA repair</keyword>
<keyword id="KW-0326">Glycosidase</keyword>
<keyword id="KW-0378">Hydrolase</keyword>
<keyword id="KW-0408">Iron</keyword>
<keyword id="KW-0411">Iron-sulfur</keyword>
<keyword id="KW-0479">Metal-binding</keyword>
<keyword id="KW-1185">Reference proteome</keyword>
<accession>A0R567</accession>
<accession>I7GFE6</accession>
<proteinExistence type="evidence at protein level"/>
<reference key="1">
    <citation type="submission" date="2006-10" db="EMBL/GenBank/DDBJ databases">
        <authorList>
            <person name="Fleischmann R.D."/>
            <person name="Dodson R.J."/>
            <person name="Haft D.H."/>
            <person name="Merkel J.S."/>
            <person name="Nelson W.C."/>
            <person name="Fraser C.M."/>
        </authorList>
    </citation>
    <scope>NUCLEOTIDE SEQUENCE [LARGE SCALE GENOMIC DNA]</scope>
    <source>
        <strain>ATCC 700084 / mc(2)155</strain>
    </source>
</reference>
<reference key="2">
    <citation type="journal article" date="2007" name="Genome Biol.">
        <title>Interrupted coding sequences in Mycobacterium smegmatis: authentic mutations or sequencing errors?</title>
        <authorList>
            <person name="Deshayes C."/>
            <person name="Perrodou E."/>
            <person name="Gallien S."/>
            <person name="Euphrasie D."/>
            <person name="Schaeffer C."/>
            <person name="Van-Dorsselaer A."/>
            <person name="Poch O."/>
            <person name="Lecompte O."/>
            <person name="Reyrat J.-M."/>
        </authorList>
    </citation>
    <scope>NUCLEOTIDE SEQUENCE [LARGE SCALE GENOMIC DNA]</scope>
    <source>
        <strain>ATCC 700084 / mc(2)155</strain>
    </source>
</reference>
<reference key="3">
    <citation type="journal article" date="2009" name="Genome Res.">
        <title>Ortho-proteogenomics: multiple proteomes investigation through orthology and a new MS-based protocol.</title>
        <authorList>
            <person name="Gallien S."/>
            <person name="Perrodou E."/>
            <person name="Carapito C."/>
            <person name="Deshayes C."/>
            <person name="Reyrat J.-M."/>
            <person name="Van Dorsselaer A."/>
            <person name="Poch O."/>
            <person name="Schaeffer C."/>
            <person name="Lecompte O."/>
        </authorList>
    </citation>
    <scope>NUCLEOTIDE SEQUENCE [LARGE SCALE GENOMIC DNA]</scope>
    <source>
        <strain>ATCC 700084 / mc(2)155</strain>
    </source>
</reference>
<reference key="4">
    <citation type="journal article" date="2007" name="DNA Repair">
        <title>A distinct role of formamidopyrimidine DNA glycosylase (MutM) in down-regulation of accumulation of G, C mutations and protection against oxidative stress in mycobacteria.</title>
        <authorList>
            <person name="Jain R."/>
            <person name="Kumar P."/>
            <person name="Varshney U."/>
        </authorList>
    </citation>
    <scope>FUNCTION</scope>
    <scope>CATALYTIC ACTIVITY</scope>
    <source>
        <strain>ATCC 700084 / mc(2)155</strain>
    </source>
</reference>
<reference key="5">
    <citation type="journal article" date="2010" name="Microbiology">
        <title>A distinct physiological role of MutY in mutation prevention in mycobacteria.</title>
        <authorList>
            <person name="Kurthkoti K."/>
            <person name="Srinath T."/>
            <person name="Kumar P."/>
            <person name="Malshetty V.S."/>
            <person name="Sang P.B."/>
            <person name="Jain R."/>
            <person name="Manjunath R."/>
            <person name="Varshney U."/>
        </authorList>
    </citation>
    <scope>DISRUPTION PHENOTYPE</scope>
    <source>
        <strain>ATCC 700084 / mc(2)155</strain>
    </source>
</reference>
<reference key="6">
    <citation type="journal article" date="2011" name="Tuberculosis">
        <title>Base excision and nucleotide excision repair pathways in mycobacteria.</title>
        <authorList>
            <person name="Kurthkoti K."/>
            <person name="Varshney U."/>
        </authorList>
    </citation>
    <scope>REVIEW</scope>
</reference>
<comment type="function">
    <text evidence="3">Adenine glycosylase active on G:A and C:A mispairs, as well as processing 7,8-dihydro-8-oxoguanine:A (8-oxoG) mismatches.</text>
</comment>
<comment type="catalytic activity">
    <reaction evidence="3">
        <text>Hydrolyzes free adenine bases from 7,8-dihydro-8-oxoguanine:adenine mismatched double-stranded DNA, leaving an apurinic site.</text>
        <dbReference type="EC" id="3.2.2.31"/>
    </reaction>
</comment>
<comment type="cofactor">
    <cofactor evidence="5">
        <name>[4Fe-4S] cluster</name>
        <dbReference type="ChEBI" id="CHEBI:49883"/>
    </cofactor>
    <text evidence="5">Binds 1 [4Fe-4S] cluster. The cluster does not appear to play a role in catalysis, but is probably involved in the proper positioning of the enzyme along the DNA strand.</text>
</comment>
<comment type="disruption phenotype">
    <text evidence="4">Loss of adenine glycosylase activity. No overall significant change in the mutation rate; an increase in C to A and A to C mutations (with a reduction in other mutations) is seen after rifampicin treatment. No change in susceptibility to H(2)O(2).</text>
</comment>
<comment type="similarity">
    <text evidence="5">Belongs to the Nth/MutY family.</text>
</comment>
<comment type="sequence caution" evidence="5">
    <conflict type="erroneous initiation">
        <sequence resource="EMBL-CDS" id="AFP42356"/>
    </conflict>
    <text>Extended N-terminus.</text>
</comment>
<sequence>MSISPVELLSWYDHARRDLPWRRPGVSAWQILVSEFMLQQTPVSRVEPIWSAWIERWPTASATAAAGPAEVLRAWGKLGYPRRAKRLHECAVVIASEYDDVVPRDVDTLLTLPGIGAYTARAVACFAYQASVPVVDTNVRRVVTRAVHGAADAPASTRDLDMVAALLPPDTTAPTFSAALMELGATVCTARSPRCGICPLSHCRWRSAGFPAGTVARRVQRYAGTDRQVRGKLLDVLRDSTTPVTRAQLDVVWLSDPAQRDRALDSLLVDGLVEQTADGRFALAGEGETGRPA</sequence>
<evidence type="ECO:0000250" key="1"/>
<evidence type="ECO:0000250" key="2">
    <source>
        <dbReference type="UniProtKB" id="P83847"/>
    </source>
</evidence>
<evidence type="ECO:0000269" key="3">
    <source>
    </source>
</evidence>
<evidence type="ECO:0000269" key="4">
    <source>
    </source>
</evidence>
<evidence type="ECO:0000305" key="5"/>
<feature type="chain" id="PRO_0000421386" description="Adenine DNA glycosylase">
    <location>
        <begin position="1"/>
        <end position="293"/>
    </location>
</feature>
<feature type="domain" description="HhH">
    <location>
        <begin position="98"/>
        <end position="126"/>
    </location>
</feature>
<feature type="active site" description="Proton donor/acceptor" evidence="2">
    <location>
        <position position="35"/>
    </location>
</feature>
<feature type="binding site" evidence="1">
    <location>
        <position position="188"/>
    </location>
    <ligand>
        <name>[4Fe-4S] cluster</name>
        <dbReference type="ChEBI" id="CHEBI:49883"/>
    </ligand>
</feature>
<feature type="binding site" evidence="1">
    <location>
        <position position="195"/>
    </location>
    <ligand>
        <name>[4Fe-4S] cluster</name>
        <dbReference type="ChEBI" id="CHEBI:49883"/>
    </ligand>
</feature>
<feature type="binding site" evidence="1">
    <location>
        <position position="198"/>
    </location>
    <ligand>
        <name>[4Fe-4S] cluster</name>
        <dbReference type="ChEBI" id="CHEBI:49883"/>
    </ligand>
</feature>
<feature type="binding site" evidence="1">
    <location>
        <position position="203"/>
    </location>
    <ligand>
        <name>[4Fe-4S] cluster</name>
        <dbReference type="ChEBI" id="CHEBI:49883"/>
    </ligand>
</feature>
<feature type="site" description="Transition state stabilizer" evidence="2">
    <location>
        <position position="136"/>
    </location>
</feature>
<gene>
    <name type="primary">mutY</name>
    <name type="ordered locus">MSMEG_6083</name>
    <name type="ordered locus">MSMEI_5923</name>
</gene>
<organism>
    <name type="scientific">Mycolicibacterium smegmatis (strain ATCC 700084 / mc(2)155)</name>
    <name type="common">Mycobacterium smegmatis</name>
    <dbReference type="NCBI Taxonomy" id="246196"/>
    <lineage>
        <taxon>Bacteria</taxon>
        <taxon>Bacillati</taxon>
        <taxon>Actinomycetota</taxon>
        <taxon>Actinomycetes</taxon>
        <taxon>Mycobacteriales</taxon>
        <taxon>Mycobacteriaceae</taxon>
        <taxon>Mycolicibacterium</taxon>
    </lineage>
</organism>
<dbReference type="EC" id="3.2.2.31" evidence="3"/>
<dbReference type="EMBL" id="CP000480">
    <property type="protein sequence ID" value="ABK72600.1"/>
    <property type="molecule type" value="Genomic_DNA"/>
</dbReference>
<dbReference type="EMBL" id="CP001663">
    <property type="protein sequence ID" value="AFP42356.1"/>
    <property type="status" value="ALT_INIT"/>
    <property type="molecule type" value="Genomic_DNA"/>
</dbReference>
<dbReference type="RefSeq" id="WP_011731026.1">
    <property type="nucleotide sequence ID" value="NZ_SIJM01000046.1"/>
</dbReference>
<dbReference type="RefSeq" id="YP_890305.1">
    <property type="nucleotide sequence ID" value="NC_008596.1"/>
</dbReference>
<dbReference type="SMR" id="A0R567"/>
<dbReference type="STRING" id="246196.MSMEG_6083"/>
<dbReference type="PaxDb" id="246196-MSMEI_5923"/>
<dbReference type="GeneID" id="93460715"/>
<dbReference type="KEGG" id="msb:LJ00_30080"/>
<dbReference type="KEGG" id="msg:MSMEI_5923"/>
<dbReference type="KEGG" id="msm:MSMEG_6083"/>
<dbReference type="PATRIC" id="fig|246196.19.peg.5921"/>
<dbReference type="eggNOG" id="COG1194">
    <property type="taxonomic scope" value="Bacteria"/>
</dbReference>
<dbReference type="OrthoDB" id="9802365at2"/>
<dbReference type="Proteomes" id="UP000000757">
    <property type="component" value="Chromosome"/>
</dbReference>
<dbReference type="Proteomes" id="UP000006158">
    <property type="component" value="Chromosome"/>
</dbReference>
<dbReference type="GO" id="GO:0051539">
    <property type="term" value="F:4 iron, 4 sulfur cluster binding"/>
    <property type="evidence" value="ECO:0007669"/>
    <property type="project" value="UniProtKB-KW"/>
</dbReference>
<dbReference type="GO" id="GO:0034039">
    <property type="term" value="F:8-oxo-7,8-dihydroguanine DNA N-glycosylase activity"/>
    <property type="evidence" value="ECO:0007669"/>
    <property type="project" value="TreeGrafter"/>
</dbReference>
<dbReference type="GO" id="GO:0035485">
    <property type="term" value="F:adenine/guanine mispair binding"/>
    <property type="evidence" value="ECO:0007669"/>
    <property type="project" value="TreeGrafter"/>
</dbReference>
<dbReference type="GO" id="GO:0046872">
    <property type="term" value="F:metal ion binding"/>
    <property type="evidence" value="ECO:0007669"/>
    <property type="project" value="UniProtKB-KW"/>
</dbReference>
<dbReference type="GO" id="GO:0032357">
    <property type="term" value="F:oxidized purine DNA binding"/>
    <property type="evidence" value="ECO:0007669"/>
    <property type="project" value="TreeGrafter"/>
</dbReference>
<dbReference type="GO" id="GO:0000701">
    <property type="term" value="F:purine-specific mismatch base pair DNA N-glycosylase activity"/>
    <property type="evidence" value="ECO:0007669"/>
    <property type="project" value="UniProtKB-EC"/>
</dbReference>
<dbReference type="GO" id="GO:0006284">
    <property type="term" value="P:base-excision repair"/>
    <property type="evidence" value="ECO:0007669"/>
    <property type="project" value="InterPro"/>
</dbReference>
<dbReference type="GO" id="GO:0006298">
    <property type="term" value="P:mismatch repair"/>
    <property type="evidence" value="ECO:0007669"/>
    <property type="project" value="TreeGrafter"/>
</dbReference>
<dbReference type="CDD" id="cd00056">
    <property type="entry name" value="ENDO3c"/>
    <property type="match status" value="1"/>
</dbReference>
<dbReference type="FunFam" id="1.10.340.30:FF:000003">
    <property type="entry name" value="A/G-specific adenine glycosylase"/>
    <property type="match status" value="1"/>
</dbReference>
<dbReference type="Gene3D" id="1.10.1670.10">
    <property type="entry name" value="Helix-hairpin-Helix base-excision DNA repair enzymes (C-terminal)"/>
    <property type="match status" value="1"/>
</dbReference>
<dbReference type="Gene3D" id="1.10.340.30">
    <property type="entry name" value="Hypothetical protein, domain 2"/>
    <property type="match status" value="1"/>
</dbReference>
<dbReference type="InterPro" id="IPR011257">
    <property type="entry name" value="DNA_glycosylase"/>
</dbReference>
<dbReference type="InterPro" id="IPR003651">
    <property type="entry name" value="Endonuclease3_FeS-loop_motif"/>
</dbReference>
<dbReference type="InterPro" id="IPR003265">
    <property type="entry name" value="HhH-GPD_domain"/>
</dbReference>
<dbReference type="InterPro" id="IPR023170">
    <property type="entry name" value="HhH_base_excis_C"/>
</dbReference>
<dbReference type="InterPro" id="IPR000445">
    <property type="entry name" value="HhH_motif"/>
</dbReference>
<dbReference type="InterPro" id="IPR044298">
    <property type="entry name" value="MIG/MutY"/>
</dbReference>
<dbReference type="PANTHER" id="PTHR42944">
    <property type="entry name" value="ADENINE DNA GLYCOSYLASE"/>
    <property type="match status" value="1"/>
</dbReference>
<dbReference type="PANTHER" id="PTHR42944:SF1">
    <property type="entry name" value="ADENINE DNA GLYCOSYLASE"/>
    <property type="match status" value="1"/>
</dbReference>
<dbReference type="Pfam" id="PF10576">
    <property type="entry name" value="EndIII_4Fe-2S"/>
    <property type="match status" value="1"/>
</dbReference>
<dbReference type="Pfam" id="PF00633">
    <property type="entry name" value="HHH"/>
    <property type="match status" value="1"/>
</dbReference>
<dbReference type="Pfam" id="PF00730">
    <property type="entry name" value="HhH-GPD"/>
    <property type="match status" value="1"/>
</dbReference>
<dbReference type="SMART" id="SM00478">
    <property type="entry name" value="ENDO3c"/>
    <property type="match status" value="1"/>
</dbReference>
<dbReference type="SMART" id="SM00525">
    <property type="entry name" value="FES"/>
    <property type="match status" value="1"/>
</dbReference>
<dbReference type="SUPFAM" id="SSF48150">
    <property type="entry name" value="DNA-glycosylase"/>
    <property type="match status" value="1"/>
</dbReference>
<protein>
    <recommendedName>
        <fullName>Adenine DNA glycosylase</fullName>
        <ecNumber evidence="3">3.2.2.31</ecNumber>
    </recommendedName>
</protein>
<name>MUTY_MYCS2</name>